<keyword id="KW-0134">Cell wall</keyword>
<keyword id="KW-0961">Cell wall biogenesis/degradation</keyword>
<keyword id="KW-0472">Membrane</keyword>
<keyword id="KW-1185">Reference proteome</keyword>
<keyword id="KW-0964">Secreted</keyword>
<keyword id="KW-0732">Signal</keyword>
<accession>Q7G6Z2</accession>
<accession>A0A0P0VTB2</accession>
<accession>Q0DV19</accession>
<accession>Q946I9</accession>
<name>EXP12_ORYSJ</name>
<evidence type="ECO:0000250" key="1"/>
<evidence type="ECO:0000255" key="2"/>
<evidence type="ECO:0000255" key="3">
    <source>
        <dbReference type="PROSITE-ProRule" id="PRU00078"/>
    </source>
</evidence>
<evidence type="ECO:0000255" key="4">
    <source>
        <dbReference type="PROSITE-ProRule" id="PRU00079"/>
    </source>
</evidence>
<evidence type="ECO:0000269" key="5">
    <source>
    </source>
</evidence>
<evidence type="ECO:0000305" key="6"/>
<evidence type="ECO:0000312" key="7">
    <source>
        <dbReference type="EMBL" id="ABF94051.1"/>
    </source>
</evidence>
<evidence type="ECO:0000312" key="8">
    <source>
        <dbReference type="EMBL" id="BAF10919.1"/>
    </source>
</evidence>
<evidence type="ECO:0000312" key="9">
    <source>
        <dbReference type="EMBL" id="EAZ25630.1"/>
    </source>
</evidence>
<sequence length="250" mass="26430">MARSAFFFHCVAAVAACIAATAAALSGTATFYGGSDASGTMGGACGYGNLYSTGYGTNTAALSSALFNDGAACGECYQITCDQSNSKWCKAGTSVTITATNLCPPDYSKPSNDGGWCNPPRQHFDMAQPAWEQIGVYRGGIVPVNFQRVSCTRKGGVRFTINGNSYFELVLITNVGGPGSIKSVQIKGTKTGWVTMSRNWGANWQANNYLNNQAISFSVTSTAGKTLVFEDVAPSNWQFGQTFTSGVQFY</sequence>
<organism>
    <name type="scientific">Oryza sativa subsp. japonica</name>
    <name type="common">Rice</name>
    <dbReference type="NCBI Taxonomy" id="39947"/>
    <lineage>
        <taxon>Eukaryota</taxon>
        <taxon>Viridiplantae</taxon>
        <taxon>Streptophyta</taxon>
        <taxon>Embryophyta</taxon>
        <taxon>Tracheophyta</taxon>
        <taxon>Spermatophyta</taxon>
        <taxon>Magnoliopsida</taxon>
        <taxon>Liliopsida</taxon>
        <taxon>Poales</taxon>
        <taxon>Poaceae</taxon>
        <taxon>BOP clade</taxon>
        <taxon>Oryzoideae</taxon>
        <taxon>Oryzeae</taxon>
        <taxon>Oryzinae</taxon>
        <taxon>Oryza</taxon>
        <taxon>Oryza sativa</taxon>
    </lineage>
</organism>
<feature type="signal peptide" evidence="2">
    <location>
        <begin position="1"/>
        <end position="24"/>
    </location>
</feature>
<feature type="chain" id="PRO_0000251991" description="Expansin-A12">
    <location>
        <begin position="25"/>
        <end position="250"/>
    </location>
</feature>
<feature type="domain" description="Expansin-like EG45" evidence="4">
    <location>
        <begin position="42"/>
        <end position="156"/>
    </location>
</feature>
<feature type="domain" description="Expansin-like CBD" evidence="3">
    <location>
        <begin position="166"/>
        <end position="245"/>
    </location>
</feature>
<reference key="1">
    <citation type="journal article" date="2002" name="Plant Physiol.">
        <title>Expression of alpha-expansin and expansin-like genes in deepwater rice.</title>
        <authorList>
            <person name="Lee Y."/>
            <person name="Kende H."/>
        </authorList>
    </citation>
    <scope>NUCLEOTIDE SEQUENCE [GENOMIC DNA / MRNA]</scope>
    <scope>TISSUE SPECIFICITY</scope>
</reference>
<reference key="2">
    <citation type="journal article" date="2005" name="Genome Res.">
        <title>Sequence, annotation, and analysis of synteny between rice chromosome 3 and diverged grass species.</title>
        <authorList>
            <consortium name="The rice chromosome 3 sequencing consortium"/>
            <person name="Buell C.R."/>
            <person name="Yuan Q."/>
            <person name="Ouyang S."/>
            <person name="Liu J."/>
            <person name="Zhu W."/>
            <person name="Wang A."/>
            <person name="Maiti R."/>
            <person name="Haas B."/>
            <person name="Wortman J."/>
            <person name="Pertea M."/>
            <person name="Jones K.M."/>
            <person name="Kim M."/>
            <person name="Overton L."/>
            <person name="Tsitrin T."/>
            <person name="Fadrosh D."/>
            <person name="Bera J."/>
            <person name="Weaver B."/>
            <person name="Jin S."/>
            <person name="Johri S."/>
            <person name="Reardon M."/>
            <person name="Webb K."/>
            <person name="Hill J."/>
            <person name="Moffat K."/>
            <person name="Tallon L."/>
            <person name="Van Aken S."/>
            <person name="Lewis M."/>
            <person name="Utterback T."/>
            <person name="Feldblyum T."/>
            <person name="Zismann V."/>
            <person name="Iobst S."/>
            <person name="Hsiao J."/>
            <person name="de Vazeille A.R."/>
            <person name="Salzberg S.L."/>
            <person name="White O."/>
            <person name="Fraser C.M."/>
            <person name="Yu Y."/>
            <person name="Kim H."/>
            <person name="Rambo T."/>
            <person name="Currie J."/>
            <person name="Collura K."/>
            <person name="Kernodle-Thompson S."/>
            <person name="Wei F."/>
            <person name="Kudrna K."/>
            <person name="Ammiraju J.S.S."/>
            <person name="Luo M."/>
            <person name="Goicoechea J.L."/>
            <person name="Wing R.A."/>
            <person name="Henry D."/>
            <person name="Oates R."/>
            <person name="Palmer M."/>
            <person name="Pries G."/>
            <person name="Saski C."/>
            <person name="Simmons J."/>
            <person name="Soderlund C."/>
            <person name="Nelson W."/>
            <person name="de la Bastide M."/>
            <person name="Spiegel L."/>
            <person name="Nascimento L."/>
            <person name="Huang E."/>
            <person name="Preston R."/>
            <person name="Zutavern T."/>
            <person name="Palmer L."/>
            <person name="O'Shaughnessy A."/>
            <person name="Dike S."/>
            <person name="McCombie W.R."/>
            <person name="Minx P."/>
            <person name="Cordum H."/>
            <person name="Wilson R."/>
            <person name="Jin W."/>
            <person name="Lee H.R."/>
            <person name="Jiang J."/>
            <person name="Jackson S."/>
        </authorList>
    </citation>
    <scope>NUCLEOTIDE SEQUENCE [LARGE SCALE GENOMIC DNA]</scope>
    <source>
        <strain>cv. Nipponbare</strain>
    </source>
</reference>
<reference key="3">
    <citation type="journal article" date="2005" name="Nature">
        <title>The map-based sequence of the rice genome.</title>
        <authorList>
            <consortium name="International rice genome sequencing project (IRGSP)"/>
        </authorList>
    </citation>
    <scope>NUCLEOTIDE SEQUENCE [LARGE SCALE GENOMIC DNA]</scope>
    <source>
        <strain>cv. Nipponbare</strain>
    </source>
</reference>
<reference key="4">
    <citation type="journal article" date="2008" name="Nucleic Acids Res.">
        <title>The rice annotation project database (RAP-DB): 2008 update.</title>
        <authorList>
            <consortium name="The rice annotation project (RAP)"/>
        </authorList>
    </citation>
    <scope>GENOME REANNOTATION</scope>
    <source>
        <strain>cv. Nipponbare</strain>
    </source>
</reference>
<reference key="5">
    <citation type="journal article" date="2013" name="Rice">
        <title>Improvement of the Oryza sativa Nipponbare reference genome using next generation sequence and optical map data.</title>
        <authorList>
            <person name="Kawahara Y."/>
            <person name="de la Bastide M."/>
            <person name="Hamilton J.P."/>
            <person name="Kanamori H."/>
            <person name="McCombie W.R."/>
            <person name="Ouyang S."/>
            <person name="Schwartz D.C."/>
            <person name="Tanaka T."/>
            <person name="Wu J."/>
            <person name="Zhou S."/>
            <person name="Childs K.L."/>
            <person name="Davidson R.M."/>
            <person name="Lin H."/>
            <person name="Quesada-Ocampo L."/>
            <person name="Vaillancourt B."/>
            <person name="Sakai H."/>
            <person name="Lee S.S."/>
            <person name="Kim J."/>
            <person name="Numa H."/>
            <person name="Itoh T."/>
            <person name="Buell C.R."/>
            <person name="Matsumoto T."/>
        </authorList>
    </citation>
    <scope>GENOME REANNOTATION</scope>
    <source>
        <strain>cv. Nipponbare</strain>
    </source>
</reference>
<reference key="6">
    <citation type="journal article" date="2005" name="PLoS Biol.">
        <title>The genomes of Oryza sativa: a history of duplications.</title>
        <authorList>
            <person name="Yu J."/>
            <person name="Wang J."/>
            <person name="Lin W."/>
            <person name="Li S."/>
            <person name="Li H."/>
            <person name="Zhou J."/>
            <person name="Ni P."/>
            <person name="Dong W."/>
            <person name="Hu S."/>
            <person name="Zeng C."/>
            <person name="Zhang J."/>
            <person name="Zhang Y."/>
            <person name="Li R."/>
            <person name="Xu Z."/>
            <person name="Li S."/>
            <person name="Li X."/>
            <person name="Zheng H."/>
            <person name="Cong L."/>
            <person name="Lin L."/>
            <person name="Yin J."/>
            <person name="Geng J."/>
            <person name="Li G."/>
            <person name="Shi J."/>
            <person name="Liu J."/>
            <person name="Lv H."/>
            <person name="Li J."/>
            <person name="Wang J."/>
            <person name="Deng Y."/>
            <person name="Ran L."/>
            <person name="Shi X."/>
            <person name="Wang X."/>
            <person name="Wu Q."/>
            <person name="Li C."/>
            <person name="Ren X."/>
            <person name="Wang J."/>
            <person name="Wang X."/>
            <person name="Li D."/>
            <person name="Liu D."/>
            <person name="Zhang X."/>
            <person name="Ji Z."/>
            <person name="Zhao W."/>
            <person name="Sun Y."/>
            <person name="Zhang Z."/>
            <person name="Bao J."/>
            <person name="Han Y."/>
            <person name="Dong L."/>
            <person name="Ji J."/>
            <person name="Chen P."/>
            <person name="Wu S."/>
            <person name="Liu J."/>
            <person name="Xiao Y."/>
            <person name="Bu D."/>
            <person name="Tan J."/>
            <person name="Yang L."/>
            <person name="Ye C."/>
            <person name="Zhang J."/>
            <person name="Xu J."/>
            <person name="Zhou Y."/>
            <person name="Yu Y."/>
            <person name="Zhang B."/>
            <person name="Zhuang S."/>
            <person name="Wei H."/>
            <person name="Liu B."/>
            <person name="Lei M."/>
            <person name="Yu H."/>
            <person name="Li Y."/>
            <person name="Xu H."/>
            <person name="Wei S."/>
            <person name="He X."/>
            <person name="Fang L."/>
            <person name="Zhang Z."/>
            <person name="Zhang Y."/>
            <person name="Huang X."/>
            <person name="Su Z."/>
            <person name="Tong W."/>
            <person name="Li J."/>
            <person name="Tong Z."/>
            <person name="Li S."/>
            <person name="Ye J."/>
            <person name="Wang L."/>
            <person name="Fang L."/>
            <person name="Lei T."/>
            <person name="Chen C.-S."/>
            <person name="Chen H.-C."/>
            <person name="Xu Z."/>
            <person name="Li H."/>
            <person name="Huang H."/>
            <person name="Zhang F."/>
            <person name="Xu H."/>
            <person name="Li N."/>
            <person name="Zhao C."/>
            <person name="Li S."/>
            <person name="Dong L."/>
            <person name="Huang Y."/>
            <person name="Li L."/>
            <person name="Xi Y."/>
            <person name="Qi Q."/>
            <person name="Li W."/>
            <person name="Zhang B."/>
            <person name="Hu W."/>
            <person name="Zhang Y."/>
            <person name="Tian X."/>
            <person name="Jiao Y."/>
            <person name="Liang X."/>
            <person name="Jin J."/>
            <person name="Gao L."/>
            <person name="Zheng W."/>
            <person name="Hao B."/>
            <person name="Liu S.-M."/>
            <person name="Wang W."/>
            <person name="Yuan L."/>
            <person name="Cao M."/>
            <person name="McDermott J."/>
            <person name="Samudrala R."/>
            <person name="Wang J."/>
            <person name="Wong G.K.-S."/>
            <person name="Yang H."/>
        </authorList>
    </citation>
    <scope>NUCLEOTIDE SEQUENCE [LARGE SCALE GENOMIC DNA]</scope>
    <source>
        <strain>cv. Nipponbare</strain>
    </source>
</reference>
<reference key="7">
    <citation type="journal article" date="2004" name="Plant Mol. Biol.">
        <title>Nomenclature for members of the expansin superfamily of genes and proteins.</title>
        <authorList>
            <person name="Kende H."/>
            <person name="Bradford K.J."/>
            <person name="Brummell D.A."/>
            <person name="Cho H.-T."/>
            <person name="Cosgrove D.J."/>
            <person name="Fleming A.J."/>
            <person name="Gehring C."/>
            <person name="Lee Y."/>
            <person name="McQueen-Mason S.J."/>
            <person name="Rose J.K.C."/>
            <person name="Voesenek L.A.C."/>
        </authorList>
    </citation>
    <scope>NOMENCLATURE</scope>
</reference>
<gene>
    <name type="primary">EXPA12</name>
    <name type="synonym">EXP12</name>
    <name evidence="8" type="ordered locus">Os03g0155300</name>
    <name evidence="7" type="ordered locus">LOC_Os03g06000</name>
    <name evidence="9" type="ORF">OsJ_09458</name>
    <name type="ORF">OSJNBa0011L14.18</name>
</gene>
<dbReference type="EMBL" id="AY046929">
    <property type="protein sequence ID" value="AAL04422.1"/>
    <property type="molecule type" value="mRNA"/>
</dbReference>
<dbReference type="EMBL" id="AF394548">
    <property type="protein sequence ID" value="AAL24484.1"/>
    <property type="molecule type" value="Genomic_DNA"/>
</dbReference>
<dbReference type="EMBL" id="AC105730">
    <property type="protein sequence ID" value="AAM51844.1"/>
    <property type="molecule type" value="Genomic_DNA"/>
</dbReference>
<dbReference type="EMBL" id="DP000009">
    <property type="protein sequence ID" value="ABF94051.1"/>
    <property type="molecule type" value="Genomic_DNA"/>
</dbReference>
<dbReference type="EMBL" id="AP008209">
    <property type="protein sequence ID" value="BAF10919.1"/>
    <property type="molecule type" value="Genomic_DNA"/>
</dbReference>
<dbReference type="EMBL" id="AP014959">
    <property type="protein sequence ID" value="BAS82359.1"/>
    <property type="molecule type" value="Genomic_DNA"/>
</dbReference>
<dbReference type="EMBL" id="CM000140">
    <property type="protein sequence ID" value="EAZ25630.1"/>
    <property type="molecule type" value="Genomic_DNA"/>
</dbReference>
<dbReference type="RefSeq" id="XP_015628563.1">
    <property type="nucleotide sequence ID" value="XM_015773077.1"/>
</dbReference>
<dbReference type="SMR" id="Q7G6Z2"/>
<dbReference type="FunCoup" id="Q7G6Z2">
    <property type="interactions" value="15"/>
</dbReference>
<dbReference type="STRING" id="39947.Q7G6Z2"/>
<dbReference type="PaxDb" id="39947-Q7G6Z2"/>
<dbReference type="EnsemblPlants" id="Os03t0155300-00">
    <property type="protein sequence ID" value="Os03t0155300-00"/>
    <property type="gene ID" value="Os03g0155300"/>
</dbReference>
<dbReference type="Gramene" id="Os03t0155300-00">
    <property type="protein sequence ID" value="Os03t0155300-00"/>
    <property type="gene ID" value="Os03g0155300"/>
</dbReference>
<dbReference type="KEGG" id="dosa:Os03g0155300"/>
<dbReference type="eggNOG" id="ENOG502QVVV">
    <property type="taxonomic scope" value="Eukaryota"/>
</dbReference>
<dbReference type="HOGENOM" id="CLU_027462_0_1_1"/>
<dbReference type="InParanoid" id="Q7G6Z2"/>
<dbReference type="OMA" id="QNSRWCK"/>
<dbReference type="OrthoDB" id="5823761at2759"/>
<dbReference type="Proteomes" id="UP000000763">
    <property type="component" value="Chromosome 3"/>
</dbReference>
<dbReference type="Proteomes" id="UP000007752">
    <property type="component" value="Chromosome 3"/>
</dbReference>
<dbReference type="Proteomes" id="UP000059680">
    <property type="component" value="Chromosome 3"/>
</dbReference>
<dbReference type="GO" id="GO:0005576">
    <property type="term" value="C:extracellular region"/>
    <property type="evidence" value="ECO:0007669"/>
    <property type="project" value="UniProtKB-KW"/>
</dbReference>
<dbReference type="GO" id="GO:0016020">
    <property type="term" value="C:membrane"/>
    <property type="evidence" value="ECO:0007669"/>
    <property type="project" value="UniProtKB-SubCell"/>
</dbReference>
<dbReference type="GO" id="GO:0009828">
    <property type="term" value="P:plant-type cell wall loosening"/>
    <property type="evidence" value="ECO:0000250"/>
    <property type="project" value="UniProtKB"/>
</dbReference>
<dbReference type="CDD" id="cd22274">
    <property type="entry name" value="DPBB_EXPA_N"/>
    <property type="match status" value="1"/>
</dbReference>
<dbReference type="FunFam" id="2.60.40.760:FF:000001">
    <property type="entry name" value="Expansin"/>
    <property type="match status" value="1"/>
</dbReference>
<dbReference type="Gene3D" id="2.60.40.760">
    <property type="entry name" value="Expansin, cellulose-binding-like domain"/>
    <property type="match status" value="1"/>
</dbReference>
<dbReference type="Gene3D" id="2.40.40.10">
    <property type="entry name" value="RlpA-like domain"/>
    <property type="match status" value="1"/>
</dbReference>
<dbReference type="InterPro" id="IPR007118">
    <property type="entry name" value="Expan_Lol_pI"/>
</dbReference>
<dbReference type="InterPro" id="IPR002963">
    <property type="entry name" value="Expansin"/>
</dbReference>
<dbReference type="InterPro" id="IPR007112">
    <property type="entry name" value="Expansin/allergen_DPBB_dom"/>
</dbReference>
<dbReference type="InterPro" id="IPR007117">
    <property type="entry name" value="Expansin_CBD"/>
</dbReference>
<dbReference type="InterPro" id="IPR036749">
    <property type="entry name" value="Expansin_CBD_sf"/>
</dbReference>
<dbReference type="InterPro" id="IPR009009">
    <property type="entry name" value="RlpA-like_DPBB"/>
</dbReference>
<dbReference type="InterPro" id="IPR036908">
    <property type="entry name" value="RlpA-like_sf"/>
</dbReference>
<dbReference type="PANTHER" id="PTHR31867">
    <property type="entry name" value="EXPANSIN-A15"/>
    <property type="match status" value="1"/>
</dbReference>
<dbReference type="Pfam" id="PF03330">
    <property type="entry name" value="DPBB_1"/>
    <property type="match status" value="1"/>
</dbReference>
<dbReference type="Pfam" id="PF01357">
    <property type="entry name" value="Expansin_C"/>
    <property type="match status" value="1"/>
</dbReference>
<dbReference type="PRINTS" id="PR01226">
    <property type="entry name" value="EXPANSIN"/>
</dbReference>
<dbReference type="PRINTS" id="PR01225">
    <property type="entry name" value="EXPANSNFAMLY"/>
</dbReference>
<dbReference type="SMART" id="SM00837">
    <property type="entry name" value="DPBB_1"/>
    <property type="match status" value="1"/>
</dbReference>
<dbReference type="SUPFAM" id="SSF50685">
    <property type="entry name" value="Barwin-like endoglucanases"/>
    <property type="match status" value="1"/>
</dbReference>
<dbReference type="SUPFAM" id="SSF49590">
    <property type="entry name" value="PHL pollen allergen"/>
    <property type="match status" value="1"/>
</dbReference>
<dbReference type="PROSITE" id="PS50843">
    <property type="entry name" value="EXPANSIN_CBD"/>
    <property type="match status" value="1"/>
</dbReference>
<dbReference type="PROSITE" id="PS50842">
    <property type="entry name" value="EXPANSIN_EG45"/>
    <property type="match status" value="1"/>
</dbReference>
<comment type="function">
    <text evidence="1">May cause loosening and extension of plant cell walls by disrupting non-covalent bonding between cellulose microfibrils and matrix glucans. No enzymatic activity has been found. May be required for rapid internodal elongation in deepwater rice during submergence (By similarity).</text>
</comment>
<comment type="subcellular location">
    <subcellularLocation>
        <location evidence="1">Secreted</location>
        <location evidence="1">Cell wall</location>
    </subcellularLocation>
    <subcellularLocation>
        <location evidence="1">Membrane</location>
        <topology evidence="1">Peripheral membrane protein</topology>
    </subcellularLocation>
</comment>
<comment type="tissue specificity">
    <text evidence="5">Expressed in roots.</text>
</comment>
<comment type="similarity">
    <text evidence="6">Belongs to the expansin family. Expansin A subfamily.</text>
</comment>
<comment type="online information" name="EXPANSIN homepage">
    <link uri="https://www.dept.psu.edu/biology/groups/expansins/index.htm"/>
</comment>
<proteinExistence type="evidence at transcript level"/>
<protein>
    <recommendedName>
        <fullName>Expansin-A12</fullName>
    </recommendedName>
    <alternativeName>
        <fullName>Alpha-expansin-12</fullName>
    </alternativeName>
    <alternativeName>
        <fullName>OsEXP12</fullName>
    </alternativeName>
    <alternativeName>
        <fullName>OsEXPA12</fullName>
    </alternativeName>
    <alternativeName>
        <fullName>OsaEXPa1.15</fullName>
    </alternativeName>
</protein>